<proteinExistence type="inferred from homology"/>
<feature type="chain" id="PRO_0000062041" description="Large ribosomal subunit protein uL16">
    <location>
        <begin position="1"/>
        <end position="144"/>
    </location>
</feature>
<name>RL16_BACLD</name>
<protein>
    <recommendedName>
        <fullName evidence="1">Large ribosomal subunit protein uL16</fullName>
    </recommendedName>
    <alternativeName>
        <fullName evidence="2">50S ribosomal protein L16</fullName>
    </alternativeName>
</protein>
<keyword id="KW-1185">Reference proteome</keyword>
<keyword id="KW-0687">Ribonucleoprotein</keyword>
<keyword id="KW-0689">Ribosomal protein</keyword>
<keyword id="KW-0694">RNA-binding</keyword>
<keyword id="KW-0699">rRNA-binding</keyword>
<keyword id="KW-0820">tRNA-binding</keyword>
<dbReference type="EMBL" id="AE017333">
    <property type="protein sequence ID" value="AAU39114.1"/>
    <property type="molecule type" value="Genomic_DNA"/>
</dbReference>
<dbReference type="EMBL" id="CP000002">
    <property type="protein sequence ID" value="AAU21769.1"/>
    <property type="molecule type" value="Genomic_DNA"/>
</dbReference>
<dbReference type="RefSeq" id="WP_003178341.1">
    <property type="nucleotide sequence ID" value="NC_006322.1"/>
</dbReference>
<dbReference type="SMR" id="Q65PA0"/>
<dbReference type="STRING" id="279010.BL01044"/>
<dbReference type="GeneID" id="92858896"/>
<dbReference type="KEGG" id="bld:BLi00140"/>
<dbReference type="KEGG" id="bli:BL01044"/>
<dbReference type="eggNOG" id="COG0197">
    <property type="taxonomic scope" value="Bacteria"/>
</dbReference>
<dbReference type="HOGENOM" id="CLU_078858_2_1_9"/>
<dbReference type="Proteomes" id="UP000000606">
    <property type="component" value="Chromosome"/>
</dbReference>
<dbReference type="GO" id="GO:0022625">
    <property type="term" value="C:cytosolic large ribosomal subunit"/>
    <property type="evidence" value="ECO:0007669"/>
    <property type="project" value="TreeGrafter"/>
</dbReference>
<dbReference type="GO" id="GO:0019843">
    <property type="term" value="F:rRNA binding"/>
    <property type="evidence" value="ECO:0007669"/>
    <property type="project" value="UniProtKB-UniRule"/>
</dbReference>
<dbReference type="GO" id="GO:0003735">
    <property type="term" value="F:structural constituent of ribosome"/>
    <property type="evidence" value="ECO:0007669"/>
    <property type="project" value="InterPro"/>
</dbReference>
<dbReference type="GO" id="GO:0000049">
    <property type="term" value="F:tRNA binding"/>
    <property type="evidence" value="ECO:0007669"/>
    <property type="project" value="UniProtKB-KW"/>
</dbReference>
<dbReference type="GO" id="GO:0006412">
    <property type="term" value="P:translation"/>
    <property type="evidence" value="ECO:0007669"/>
    <property type="project" value="UniProtKB-UniRule"/>
</dbReference>
<dbReference type="CDD" id="cd01433">
    <property type="entry name" value="Ribosomal_L16_L10e"/>
    <property type="match status" value="1"/>
</dbReference>
<dbReference type="FunFam" id="3.90.1170.10:FF:000001">
    <property type="entry name" value="50S ribosomal protein L16"/>
    <property type="match status" value="1"/>
</dbReference>
<dbReference type="Gene3D" id="3.90.1170.10">
    <property type="entry name" value="Ribosomal protein L10e/L16"/>
    <property type="match status" value="1"/>
</dbReference>
<dbReference type="HAMAP" id="MF_01342">
    <property type="entry name" value="Ribosomal_uL16"/>
    <property type="match status" value="1"/>
</dbReference>
<dbReference type="InterPro" id="IPR047873">
    <property type="entry name" value="Ribosomal_uL16"/>
</dbReference>
<dbReference type="InterPro" id="IPR000114">
    <property type="entry name" value="Ribosomal_uL16_bact-type"/>
</dbReference>
<dbReference type="InterPro" id="IPR020798">
    <property type="entry name" value="Ribosomal_uL16_CS"/>
</dbReference>
<dbReference type="InterPro" id="IPR016180">
    <property type="entry name" value="Ribosomal_uL16_dom"/>
</dbReference>
<dbReference type="InterPro" id="IPR036920">
    <property type="entry name" value="Ribosomal_uL16_sf"/>
</dbReference>
<dbReference type="NCBIfam" id="TIGR01164">
    <property type="entry name" value="rplP_bact"/>
    <property type="match status" value="1"/>
</dbReference>
<dbReference type="PANTHER" id="PTHR12220">
    <property type="entry name" value="50S/60S RIBOSOMAL PROTEIN L16"/>
    <property type="match status" value="1"/>
</dbReference>
<dbReference type="PANTHER" id="PTHR12220:SF13">
    <property type="entry name" value="LARGE RIBOSOMAL SUBUNIT PROTEIN UL16M"/>
    <property type="match status" value="1"/>
</dbReference>
<dbReference type="Pfam" id="PF00252">
    <property type="entry name" value="Ribosomal_L16"/>
    <property type="match status" value="1"/>
</dbReference>
<dbReference type="PRINTS" id="PR00060">
    <property type="entry name" value="RIBOSOMALL16"/>
</dbReference>
<dbReference type="SUPFAM" id="SSF54686">
    <property type="entry name" value="Ribosomal protein L16p/L10e"/>
    <property type="match status" value="1"/>
</dbReference>
<dbReference type="PROSITE" id="PS00586">
    <property type="entry name" value="RIBOSOMAL_L16_1"/>
    <property type="match status" value="1"/>
</dbReference>
<dbReference type="PROSITE" id="PS00701">
    <property type="entry name" value="RIBOSOMAL_L16_2"/>
    <property type="match status" value="1"/>
</dbReference>
<organism>
    <name type="scientific">Bacillus licheniformis (strain ATCC 14580 / DSM 13 / JCM 2505 / CCUG 7422 / NBRC 12200 / NCIMB 9375 / NCTC 10341 / NRRL NRS-1264 / Gibson 46)</name>
    <dbReference type="NCBI Taxonomy" id="279010"/>
    <lineage>
        <taxon>Bacteria</taxon>
        <taxon>Bacillati</taxon>
        <taxon>Bacillota</taxon>
        <taxon>Bacilli</taxon>
        <taxon>Bacillales</taxon>
        <taxon>Bacillaceae</taxon>
        <taxon>Bacillus</taxon>
    </lineage>
</organism>
<sequence>MLMPKRVKYRREHRGKMRGRAKGGTEVHFGEYGIQAQESSWITNRQIEAARIAMTRYMKRGGKVWIKIFPSKPYTAKPLEVRMGSGKGAPEGWVAVVKPGKVLFEISGVSEEVAREALRLASHKLPIKTKFVKREEIGGESNES</sequence>
<gene>
    <name evidence="1" type="primary">rplP</name>
    <name type="ordered locus">BLi00140</name>
    <name type="ordered locus">BL01044</name>
</gene>
<comment type="function">
    <text evidence="1">Binds 23S rRNA and is also seen to make contacts with the A and possibly P site tRNAs.</text>
</comment>
<comment type="subunit">
    <text evidence="1">Part of the 50S ribosomal subunit.</text>
</comment>
<comment type="similarity">
    <text evidence="1">Belongs to the universal ribosomal protein uL16 family.</text>
</comment>
<reference key="1">
    <citation type="journal article" date="2004" name="J. Mol. Microbiol. Biotechnol.">
        <title>The complete genome sequence of Bacillus licheniformis DSM13, an organism with great industrial potential.</title>
        <authorList>
            <person name="Veith B."/>
            <person name="Herzberg C."/>
            <person name="Steckel S."/>
            <person name="Feesche J."/>
            <person name="Maurer K.H."/>
            <person name="Ehrenreich P."/>
            <person name="Baeumer S."/>
            <person name="Henne A."/>
            <person name="Liesegang H."/>
            <person name="Merkl R."/>
            <person name="Ehrenreich A."/>
            <person name="Gottschalk G."/>
        </authorList>
    </citation>
    <scope>NUCLEOTIDE SEQUENCE [LARGE SCALE GENOMIC DNA]</scope>
    <source>
        <strain>ATCC 14580 / DSM 13 / JCM 2505 / CCUG 7422 / NBRC 12200 / NCIMB 9375 / NCTC 10341 / NRRL NRS-1264 / Gibson 46</strain>
    </source>
</reference>
<reference key="2">
    <citation type="journal article" date="2004" name="Genome Biol.">
        <title>Complete genome sequence of the industrial bacterium Bacillus licheniformis and comparisons with closely related Bacillus species.</title>
        <authorList>
            <person name="Rey M.W."/>
            <person name="Ramaiya P."/>
            <person name="Nelson B.A."/>
            <person name="Brody-Karpin S.D."/>
            <person name="Zaretsky E.J."/>
            <person name="Tang M."/>
            <person name="Lopez de Leon A."/>
            <person name="Xiang H."/>
            <person name="Gusti V."/>
            <person name="Clausen I.G."/>
            <person name="Olsen P.B."/>
            <person name="Rasmussen M.D."/>
            <person name="Andersen J.T."/>
            <person name="Joergensen P.L."/>
            <person name="Larsen T.S."/>
            <person name="Sorokin A."/>
            <person name="Bolotin A."/>
            <person name="Lapidus A."/>
            <person name="Galleron N."/>
            <person name="Ehrlich S.D."/>
            <person name="Berka R.M."/>
        </authorList>
    </citation>
    <scope>NUCLEOTIDE SEQUENCE [LARGE SCALE GENOMIC DNA]</scope>
    <source>
        <strain>ATCC 14580 / DSM 13 / JCM 2505 / CCUG 7422 / NBRC 12200 / NCIMB 9375 / NCTC 10341 / NRRL NRS-1264 / Gibson 46</strain>
    </source>
</reference>
<accession>Q65PA0</accession>
<accession>Q62ZN9</accession>
<evidence type="ECO:0000255" key="1">
    <source>
        <dbReference type="HAMAP-Rule" id="MF_01342"/>
    </source>
</evidence>
<evidence type="ECO:0000305" key="2"/>